<feature type="signal peptide" evidence="1">
    <location>
        <begin position="1"/>
        <end position="19"/>
    </location>
</feature>
<feature type="chain" id="PRO_0000339294" description="Epididymal-specific lipocalin-5, C form">
    <location>
        <begin position="20"/>
        <end position="188"/>
    </location>
</feature>
<feature type="chain" id="PRO_0000017869" description="Epididymal-specific lipocalin-5, B form">
    <location>
        <begin position="23"/>
        <end position="188"/>
    </location>
</feature>
<feature type="disulfide bond">
    <location>
        <begin position="82"/>
        <end position="176"/>
    </location>
</feature>
<feature type="helix" evidence="3">
    <location>
        <begin position="30"/>
        <end position="33"/>
    </location>
</feature>
<feature type="strand" evidence="3">
    <location>
        <begin position="35"/>
        <end position="44"/>
    </location>
</feature>
<feature type="strand" evidence="3">
    <location>
        <begin position="59"/>
        <end position="66"/>
    </location>
</feature>
<feature type="strand" evidence="3">
    <location>
        <begin position="69"/>
        <end position="78"/>
    </location>
</feature>
<feature type="strand" evidence="3">
    <location>
        <begin position="81"/>
        <end position="91"/>
    </location>
</feature>
<feature type="strand" evidence="3">
    <location>
        <begin position="97"/>
        <end position="102"/>
    </location>
</feature>
<feature type="strand" evidence="3">
    <location>
        <begin position="105"/>
        <end position="114"/>
    </location>
</feature>
<feature type="strand" evidence="3">
    <location>
        <begin position="116"/>
        <end position="128"/>
    </location>
</feature>
<feature type="strand" evidence="3">
    <location>
        <begin position="131"/>
        <end position="141"/>
    </location>
</feature>
<feature type="helix" evidence="3">
    <location>
        <begin position="147"/>
        <end position="159"/>
    </location>
</feature>
<feature type="helix" evidence="3">
    <location>
        <begin position="164"/>
        <end position="166"/>
    </location>
</feature>
<feature type="strand" evidence="3">
    <location>
        <begin position="167"/>
        <end position="169"/>
    </location>
</feature>
<feature type="helix" evidence="3">
    <location>
        <begin position="175"/>
        <end position="182"/>
    </location>
</feature>
<name>LCN5_RAT</name>
<reference key="1">
    <citation type="journal article" date="1990" name="Biol. Reprod.">
        <title>An 18-kDa androgen-regulated protein that modifies galactosyltransferase activity is synthesized by the rat caput epididymidis, but has no structural similarity to rat milk alphalactalbumin.</title>
        <authorList>
            <person name="Moore A."/>
            <person name="Hall L."/>
            <person name="Hamilton D.W."/>
        </authorList>
    </citation>
    <scope>NUCLEOTIDE SEQUENCE [MRNA]</scope>
    <source>
        <strain>Wistar</strain>
        <tissue>Epididymis</tissue>
    </source>
</reference>
<reference key="2">
    <citation type="journal article" date="1992" name="Biochem. J.">
        <title>Structure and expression of the rat epididymal secretory protein I gene. An androgen-regulated member of the lipocalin superfamily with a rare splice donor site.</title>
        <authorList>
            <person name="Girotti M."/>
            <person name="Jones R."/>
            <person name="Emery D.C."/>
            <person name="Chia W."/>
            <person name="Hall L."/>
        </authorList>
    </citation>
    <scope>NUCLEOTIDE SEQUENCE [GENOMIC DNA]</scope>
    <source>
        <strain>Sprague-Dawley</strain>
    </source>
</reference>
<reference key="3">
    <citation type="journal article" date="1986" name="J. Biol. Chem.">
        <title>Molecular cloning of the cDNA for two major androgen-dependent secretory proteins of 18.5 kilodaltons synthesized by the rat epididymis.</title>
        <authorList>
            <person name="Brooks D.E."/>
            <person name="Means A.R."/>
            <person name="Wright E.J."/>
            <person name="Singh S.P."/>
            <person name="Tiver K.K."/>
        </authorList>
    </citation>
    <scope>NUCLEOTIDE SEQUENCE [MRNA] OF 5-188</scope>
    <scope>PROTEIN SEQUENCE OF 23-40</scope>
</reference>
<reference key="4">
    <citation type="journal article" date="1990" name="J. Biol. Chem.">
        <title>Purification and crystallization of a retinoic acid-binding protein from rat epididymis. Identity with the major androgen-dependent epididymal proteins.</title>
        <authorList>
            <person name="Newcomer M.E."/>
            <person name="Ong D.E."/>
        </authorList>
    </citation>
    <scope>PROTEIN SEQUENCE OF 20-47</scope>
    <scope>CHARACTERIZATION</scope>
</reference>
<reference key="5">
    <citation type="submission" date="2007-07" db="UniProtKB">
        <authorList>
            <person name="Lubec G."/>
            <person name="Kang S.U."/>
        </authorList>
    </citation>
    <scope>PROTEIN SEQUENCE OF 58-66</scope>
    <scope>IDENTIFICATION BY MASS SPECTROMETRY</scope>
    <source>
        <strain>Sprague-Dawley</strain>
        <tissue>Brain</tissue>
    </source>
</reference>
<reference key="6">
    <citation type="journal article" date="1993" name="Structure">
        <title>Structure of the epididymal retinoic acid binding protein at 2.1-A resolution.</title>
        <authorList>
            <person name="Newcomer M.E."/>
        </authorList>
    </citation>
    <scope>X-RAY CRYSTALLOGRAPHY (2.1 ANGSTROMS)</scope>
</reference>
<accession>P06911</accession>
<sequence length="188" mass="20670">MENIMPFALLGLCVGLAAGTEGAVVKDFDISKFLGFWYEIAFASKMGTPGLAHKEEKMGAMVVELKENLLALTTTYYSEDHCVLEKVTATEGDGPAKFQVTRLSGKKEVVVEATDYLTYAIIDITSLVAGAVHRTMKLYSRSLDDNGEALYNFRKITSDHGFSETDLYILKHDLTCVKVLQSAAESRP</sequence>
<protein>
    <recommendedName>
        <fullName>Epididymal-specific lipocalin-5</fullName>
    </recommendedName>
    <alternativeName>
        <fullName>Androgen-dependent epididymal 18.5 kDa protein</fullName>
    </alternativeName>
    <alternativeName>
        <fullName>Epididymal retinoic acid-binding protein</fullName>
        <shortName>E-RABP</shortName>
    </alternativeName>
    <alternativeName>
        <fullName>Epididymal secretory protein I</fullName>
        <shortName>ESP-I</shortName>
    </alternativeName>
    <component>
        <recommendedName>
            <fullName>Epididymal-specific lipocalin-5, B form</fullName>
        </recommendedName>
    </component>
    <component>
        <recommendedName>
            <fullName>Epididymal-specific lipocalin-5, C form</fullName>
        </recommendedName>
    </component>
</protein>
<proteinExistence type="evidence at protein level"/>
<organism>
    <name type="scientific">Rattus norvegicus</name>
    <name type="common">Rat</name>
    <dbReference type="NCBI Taxonomy" id="10116"/>
    <lineage>
        <taxon>Eukaryota</taxon>
        <taxon>Metazoa</taxon>
        <taxon>Chordata</taxon>
        <taxon>Craniata</taxon>
        <taxon>Vertebrata</taxon>
        <taxon>Euteleostomi</taxon>
        <taxon>Mammalia</taxon>
        <taxon>Eutheria</taxon>
        <taxon>Euarchontoglires</taxon>
        <taxon>Glires</taxon>
        <taxon>Rodentia</taxon>
        <taxon>Myomorpha</taxon>
        <taxon>Muroidea</taxon>
        <taxon>Muridae</taxon>
        <taxon>Murinae</taxon>
        <taxon>Rattus</taxon>
    </lineage>
</organism>
<keyword id="KW-0002">3D-structure</keyword>
<keyword id="KW-0903">Direct protein sequencing</keyword>
<keyword id="KW-1015">Disulfide bond</keyword>
<keyword id="KW-1185">Reference proteome</keyword>
<keyword id="KW-0964">Secreted</keyword>
<keyword id="KW-0732">Signal</keyword>
<keyword id="KW-0813">Transport</keyword>
<comment type="function">
    <text>Associates with spermatozoa in the epididymal fluid but does not bind tightly to them. Binds both all-trans and 9-cis retinoic acid. May act as a retinoid carrier protein which is required for epididymal function and/or sperm maturation.</text>
</comment>
<comment type="subcellular location">
    <subcellularLocation>
        <location>Secreted</location>
    </subcellularLocation>
    <text>Synthesized in the proximal part of the epididymis and secreted into the epididymal fluid.</text>
</comment>
<comment type="tissue specificity">
    <text>Synthesized exclusively in the proximal part (caput epididymidis) of the epididymis. It makes up a substantial part of the total protein in the epididymal luminal fluid and binds to the sperm membrane.</text>
</comment>
<comment type="PTM">
    <text>There are two similar, immunologically cross-reacting forms of this protein, designated B and C, which probably result from different processing of the amino end.</text>
</comment>
<comment type="PTM">
    <text>The N-terminus of form C is probably blocked.</text>
</comment>
<comment type="similarity">
    <text evidence="2">Belongs to the calycin superfamily. Lipocalin family.</text>
</comment>
<dbReference type="EMBL" id="X59831">
    <property type="protein sequence ID" value="CAA42493.1"/>
    <property type="molecule type" value="Genomic_DNA"/>
</dbReference>
<dbReference type="EMBL" id="X59832">
    <property type="protein sequence ID" value="CAA42494.1"/>
    <property type="molecule type" value="mRNA"/>
</dbReference>
<dbReference type="EMBL" id="M12790">
    <property type="protein sequence ID" value="AAA41127.1"/>
    <property type="molecule type" value="mRNA"/>
</dbReference>
<dbReference type="PIR" id="A43801">
    <property type="entry name" value="SQRTAD"/>
</dbReference>
<dbReference type="RefSeq" id="NP_077050.1">
    <property type="nucleotide sequence ID" value="NM_024136.1"/>
</dbReference>
<dbReference type="RefSeq" id="XP_008759802.1">
    <property type="nucleotide sequence ID" value="XM_008761580.2"/>
</dbReference>
<dbReference type="PDB" id="1EPA">
    <property type="method" value="X-ray"/>
    <property type="resolution" value="2.10 A"/>
    <property type="chains" value="A/B=23-186"/>
</dbReference>
<dbReference type="PDB" id="1EPB">
    <property type="method" value="X-ray"/>
    <property type="resolution" value="2.20 A"/>
    <property type="chains" value="A/B=23-186"/>
</dbReference>
<dbReference type="PDBsum" id="1EPA"/>
<dbReference type="PDBsum" id="1EPB"/>
<dbReference type="SMR" id="P06911"/>
<dbReference type="STRING" id="10116.ENSRNOP00000058570"/>
<dbReference type="iPTMnet" id="P06911"/>
<dbReference type="PhosphoSitePlus" id="P06911"/>
<dbReference type="PaxDb" id="10116-ENSRNOP00000058570"/>
<dbReference type="GeneID" id="29552"/>
<dbReference type="KEGG" id="rno:29552"/>
<dbReference type="UCSC" id="RGD:69320">
    <property type="organism name" value="rat"/>
</dbReference>
<dbReference type="AGR" id="RGD:69320"/>
<dbReference type="CTD" id="13863"/>
<dbReference type="RGD" id="69320">
    <property type="gene designation" value="Lcn5"/>
</dbReference>
<dbReference type="VEuPathDB" id="HostDB:ENSRNOG00000058597"/>
<dbReference type="eggNOG" id="ENOG502TDU9">
    <property type="taxonomic scope" value="Eukaryota"/>
</dbReference>
<dbReference type="HOGENOM" id="CLU_1424476_0_0_1"/>
<dbReference type="InParanoid" id="P06911"/>
<dbReference type="OrthoDB" id="9627583at2759"/>
<dbReference type="PhylomeDB" id="P06911"/>
<dbReference type="TreeFam" id="TF336103"/>
<dbReference type="EvolutionaryTrace" id="P06911"/>
<dbReference type="PRO" id="PR:P06911"/>
<dbReference type="Proteomes" id="UP000002494">
    <property type="component" value="Chromosome 3"/>
</dbReference>
<dbReference type="Bgee" id="ENSRNOG00000058597">
    <property type="expression patterns" value="Expressed in cerebellum and 4 other cell types or tissues"/>
</dbReference>
<dbReference type="GO" id="GO:0005576">
    <property type="term" value="C:extracellular region"/>
    <property type="evidence" value="ECO:0000304"/>
    <property type="project" value="RGD"/>
</dbReference>
<dbReference type="GO" id="GO:0036094">
    <property type="term" value="F:small molecule binding"/>
    <property type="evidence" value="ECO:0007669"/>
    <property type="project" value="InterPro"/>
</dbReference>
<dbReference type="CDD" id="cd19421">
    <property type="entry name" value="lipocalin_5_8-like"/>
    <property type="match status" value="1"/>
</dbReference>
<dbReference type="FunFam" id="2.40.128.20:FF:000046">
    <property type="entry name" value="Epididymal-specific lipocalin-5"/>
    <property type="match status" value="1"/>
</dbReference>
<dbReference type="Gene3D" id="2.40.128.20">
    <property type="match status" value="1"/>
</dbReference>
<dbReference type="InterPro" id="IPR012674">
    <property type="entry name" value="Calycin"/>
</dbReference>
<dbReference type="InterPro" id="IPR002345">
    <property type="entry name" value="Lipocalin"/>
</dbReference>
<dbReference type="InterPro" id="IPR022272">
    <property type="entry name" value="Lipocalin_CS"/>
</dbReference>
<dbReference type="InterPro" id="IPR000566">
    <property type="entry name" value="Lipocln_cytosolic_FA-bd_dom"/>
</dbReference>
<dbReference type="PANTHER" id="PTHR11430:SF71">
    <property type="entry name" value="EPIDIDYMAL-SPECIFIC LIPOCALIN-5"/>
    <property type="match status" value="1"/>
</dbReference>
<dbReference type="PANTHER" id="PTHR11430">
    <property type="entry name" value="LIPOCALIN"/>
    <property type="match status" value="1"/>
</dbReference>
<dbReference type="Pfam" id="PF00061">
    <property type="entry name" value="Lipocalin"/>
    <property type="match status" value="1"/>
</dbReference>
<dbReference type="PRINTS" id="PR01254">
    <property type="entry name" value="PGNDSYNTHASE"/>
</dbReference>
<dbReference type="SUPFAM" id="SSF50814">
    <property type="entry name" value="Lipocalins"/>
    <property type="match status" value="1"/>
</dbReference>
<dbReference type="PROSITE" id="PS00213">
    <property type="entry name" value="LIPOCALIN"/>
    <property type="match status" value="1"/>
</dbReference>
<evidence type="ECO:0000269" key="1">
    <source>
    </source>
</evidence>
<evidence type="ECO:0000305" key="2"/>
<evidence type="ECO:0007829" key="3">
    <source>
        <dbReference type="PDB" id="1EPA"/>
    </source>
</evidence>
<gene>
    <name type="primary">Lcn5</name>
    <name type="synonym">Erabp</name>
</gene>